<keyword id="KW-0067">ATP-binding</keyword>
<keyword id="KW-0963">Cytoplasm</keyword>
<keyword id="KW-0347">Helicase</keyword>
<keyword id="KW-0378">Hydrolase</keyword>
<keyword id="KW-0507">mRNA processing</keyword>
<keyword id="KW-0508">mRNA splicing</keyword>
<keyword id="KW-0547">Nucleotide-binding</keyword>
<keyword id="KW-0539">Nucleus</keyword>
<keyword id="KW-1185">Reference proteome</keyword>
<proteinExistence type="inferred from homology"/>
<gene>
    <name type="primary">PRP28</name>
    <name type="ORF">FGRRES_06849</name>
    <name type="ORF">FGSG_06849</name>
</gene>
<reference key="1">
    <citation type="journal article" date="2007" name="Science">
        <title>The Fusarium graminearum genome reveals a link between localized polymorphism and pathogen specialization.</title>
        <authorList>
            <person name="Cuomo C.A."/>
            <person name="Gueldener U."/>
            <person name="Xu J.-R."/>
            <person name="Trail F."/>
            <person name="Turgeon B.G."/>
            <person name="Di Pietro A."/>
            <person name="Walton J.D."/>
            <person name="Ma L.-J."/>
            <person name="Baker S.E."/>
            <person name="Rep M."/>
            <person name="Adam G."/>
            <person name="Antoniw J."/>
            <person name="Baldwin T."/>
            <person name="Calvo S.E."/>
            <person name="Chang Y.-L."/>
            <person name="DeCaprio D."/>
            <person name="Gale L.R."/>
            <person name="Gnerre S."/>
            <person name="Goswami R.S."/>
            <person name="Hammond-Kosack K."/>
            <person name="Harris L.J."/>
            <person name="Hilburn K."/>
            <person name="Kennell J.C."/>
            <person name="Kroken S."/>
            <person name="Magnuson J.K."/>
            <person name="Mannhaupt G."/>
            <person name="Mauceli E.W."/>
            <person name="Mewes H.-W."/>
            <person name="Mitterbauer R."/>
            <person name="Muehlbauer G."/>
            <person name="Muensterkoetter M."/>
            <person name="Nelson D."/>
            <person name="O'Donnell K."/>
            <person name="Ouellet T."/>
            <person name="Qi W."/>
            <person name="Quesneville H."/>
            <person name="Roncero M.I.G."/>
            <person name="Seong K.-Y."/>
            <person name="Tetko I.V."/>
            <person name="Urban M."/>
            <person name="Waalwijk C."/>
            <person name="Ward T.J."/>
            <person name="Yao J."/>
            <person name="Birren B.W."/>
            <person name="Kistler H.C."/>
        </authorList>
    </citation>
    <scope>NUCLEOTIDE SEQUENCE [LARGE SCALE GENOMIC DNA]</scope>
    <source>
        <strain>ATCC MYA-4620 / CBS 123657 / FGSC 9075 / NRRL 31084 / PH-1</strain>
    </source>
</reference>
<reference key="2">
    <citation type="journal article" date="2010" name="Nature">
        <title>Comparative genomics reveals mobile pathogenicity chromosomes in Fusarium.</title>
        <authorList>
            <person name="Ma L.-J."/>
            <person name="van der Does H.C."/>
            <person name="Borkovich K.A."/>
            <person name="Coleman J.J."/>
            <person name="Daboussi M.-J."/>
            <person name="Di Pietro A."/>
            <person name="Dufresne M."/>
            <person name="Freitag M."/>
            <person name="Grabherr M."/>
            <person name="Henrissat B."/>
            <person name="Houterman P.M."/>
            <person name="Kang S."/>
            <person name="Shim W.-B."/>
            <person name="Woloshuk C."/>
            <person name="Xie X."/>
            <person name="Xu J.-R."/>
            <person name="Antoniw J."/>
            <person name="Baker S.E."/>
            <person name="Bluhm B.H."/>
            <person name="Breakspear A."/>
            <person name="Brown D.W."/>
            <person name="Butchko R.A.E."/>
            <person name="Chapman S."/>
            <person name="Coulson R."/>
            <person name="Coutinho P.M."/>
            <person name="Danchin E.G.J."/>
            <person name="Diener A."/>
            <person name="Gale L.R."/>
            <person name="Gardiner D.M."/>
            <person name="Goff S."/>
            <person name="Hammond-Kosack K.E."/>
            <person name="Hilburn K."/>
            <person name="Hua-Van A."/>
            <person name="Jonkers W."/>
            <person name="Kazan K."/>
            <person name="Kodira C.D."/>
            <person name="Koehrsen M."/>
            <person name="Kumar L."/>
            <person name="Lee Y.-H."/>
            <person name="Li L."/>
            <person name="Manners J.M."/>
            <person name="Miranda-Saavedra D."/>
            <person name="Mukherjee M."/>
            <person name="Park G."/>
            <person name="Park J."/>
            <person name="Park S.-Y."/>
            <person name="Proctor R.H."/>
            <person name="Regev A."/>
            <person name="Ruiz-Roldan M.C."/>
            <person name="Sain D."/>
            <person name="Sakthikumar S."/>
            <person name="Sykes S."/>
            <person name="Schwartz D.C."/>
            <person name="Turgeon B.G."/>
            <person name="Wapinski I."/>
            <person name="Yoder O."/>
            <person name="Young S."/>
            <person name="Zeng Q."/>
            <person name="Zhou S."/>
            <person name="Galagan J."/>
            <person name="Cuomo C.A."/>
            <person name="Kistler H.C."/>
            <person name="Rep M."/>
        </authorList>
    </citation>
    <scope>GENOME REANNOTATION</scope>
    <source>
        <strain>ATCC MYA-4620 / CBS 123657 / FGSC 9075 / NRRL 31084 / PH-1</strain>
    </source>
</reference>
<reference key="3">
    <citation type="journal article" date="2015" name="BMC Genomics">
        <title>The completed genome sequence of the pathogenic ascomycete fungus Fusarium graminearum.</title>
        <authorList>
            <person name="King R."/>
            <person name="Urban M."/>
            <person name="Hammond-Kosack M.C.U."/>
            <person name="Hassani-Pak K."/>
            <person name="Hammond-Kosack K.E."/>
        </authorList>
    </citation>
    <scope>NUCLEOTIDE SEQUENCE [LARGE SCALE GENOMIC DNA]</scope>
    <source>
        <strain>ATCC MYA-4620 / CBS 123657 / FGSC 9075 / NRRL 31084 / PH-1</strain>
    </source>
</reference>
<comment type="function">
    <text evidence="1">ATP-dependent RNA helicase involved in mRNA splicing. May destabilize the U1/5'-splice site duplex to permit an effective competition for the 5'-splice site by the U6 snRNA, resulting in the switch between U1 and U6 at the 5'-splice site. May also act to unwind the U4/U6 base-pairing interaction in the U4/U6/U5 snRNP, facilitating the first covalent step of splicing (By similarity).</text>
</comment>
<comment type="catalytic activity">
    <reaction>
        <text>ATP + H2O = ADP + phosphate + H(+)</text>
        <dbReference type="Rhea" id="RHEA:13065"/>
        <dbReference type="ChEBI" id="CHEBI:15377"/>
        <dbReference type="ChEBI" id="CHEBI:15378"/>
        <dbReference type="ChEBI" id="CHEBI:30616"/>
        <dbReference type="ChEBI" id="CHEBI:43474"/>
        <dbReference type="ChEBI" id="CHEBI:456216"/>
        <dbReference type="EC" id="3.6.4.13"/>
    </reaction>
</comment>
<comment type="subunit">
    <text evidence="1">Component of the U5 snRNP complex.</text>
</comment>
<comment type="subcellular location">
    <subcellularLocation>
        <location evidence="1">Cytoplasm</location>
    </subcellularLocation>
    <subcellularLocation>
        <location evidence="1">Nucleus</location>
    </subcellularLocation>
</comment>
<comment type="domain">
    <text>The Q motif is unique to and characteristic of the DEAD box family of RNA helicases and controls ATP binding and hydrolysis.</text>
</comment>
<comment type="similarity">
    <text evidence="5">Belongs to the DEAD box helicase family. DDX23/PRP28 subfamily.</text>
</comment>
<dbReference type="EC" id="3.6.4.13"/>
<dbReference type="EMBL" id="DS231666">
    <property type="protein sequence ID" value="ESU12996.1"/>
    <property type="molecule type" value="Genomic_DNA"/>
</dbReference>
<dbReference type="EMBL" id="HG970335">
    <property type="protein sequence ID" value="CEF85138.1"/>
    <property type="molecule type" value="Genomic_DNA"/>
</dbReference>
<dbReference type="RefSeq" id="XP_011326503.1">
    <property type="nucleotide sequence ID" value="XM_011328201.1"/>
</dbReference>
<dbReference type="SMR" id="Q4I7F9"/>
<dbReference type="FunCoup" id="Q4I7F9">
    <property type="interactions" value="907"/>
</dbReference>
<dbReference type="STRING" id="229533.Q4I7F9"/>
<dbReference type="GeneID" id="23553959"/>
<dbReference type="KEGG" id="fgr:FGSG_06849"/>
<dbReference type="VEuPathDB" id="FungiDB:FGRAMPH1_01G23327"/>
<dbReference type="eggNOG" id="KOG0333">
    <property type="taxonomic scope" value="Eukaryota"/>
</dbReference>
<dbReference type="HOGENOM" id="CLU_003041_11_3_1"/>
<dbReference type="InParanoid" id="Q4I7F9"/>
<dbReference type="OrthoDB" id="104806at110618"/>
<dbReference type="PHI-base" id="PHI:1458"/>
<dbReference type="Proteomes" id="UP000070720">
    <property type="component" value="Chromosome 4"/>
</dbReference>
<dbReference type="GO" id="GO:0005737">
    <property type="term" value="C:cytoplasm"/>
    <property type="evidence" value="ECO:0007669"/>
    <property type="project" value="UniProtKB-SubCell"/>
</dbReference>
<dbReference type="GO" id="GO:0005634">
    <property type="term" value="C:nucleus"/>
    <property type="evidence" value="ECO:0007669"/>
    <property type="project" value="UniProtKB-SubCell"/>
</dbReference>
<dbReference type="GO" id="GO:0005524">
    <property type="term" value="F:ATP binding"/>
    <property type="evidence" value="ECO:0007669"/>
    <property type="project" value="UniProtKB-KW"/>
</dbReference>
<dbReference type="GO" id="GO:0016887">
    <property type="term" value="F:ATP hydrolysis activity"/>
    <property type="evidence" value="ECO:0007669"/>
    <property type="project" value="RHEA"/>
</dbReference>
<dbReference type="GO" id="GO:0003676">
    <property type="term" value="F:nucleic acid binding"/>
    <property type="evidence" value="ECO:0007669"/>
    <property type="project" value="InterPro"/>
</dbReference>
<dbReference type="GO" id="GO:0003724">
    <property type="term" value="F:RNA helicase activity"/>
    <property type="evidence" value="ECO:0007669"/>
    <property type="project" value="UniProtKB-EC"/>
</dbReference>
<dbReference type="GO" id="GO:0006397">
    <property type="term" value="P:mRNA processing"/>
    <property type="evidence" value="ECO:0007669"/>
    <property type="project" value="UniProtKB-KW"/>
</dbReference>
<dbReference type="GO" id="GO:0008380">
    <property type="term" value="P:RNA splicing"/>
    <property type="evidence" value="ECO:0007669"/>
    <property type="project" value="UniProtKB-KW"/>
</dbReference>
<dbReference type="CDD" id="cd17945">
    <property type="entry name" value="DEADc_DDX23"/>
    <property type="match status" value="1"/>
</dbReference>
<dbReference type="CDD" id="cd18787">
    <property type="entry name" value="SF2_C_DEAD"/>
    <property type="match status" value="1"/>
</dbReference>
<dbReference type="FunFam" id="3.40.50.300:FF:000322">
    <property type="entry name" value="probable ATP-dependent RNA helicase DDX23"/>
    <property type="match status" value="1"/>
</dbReference>
<dbReference type="Gene3D" id="3.40.50.300">
    <property type="entry name" value="P-loop containing nucleotide triphosphate hydrolases"/>
    <property type="match status" value="2"/>
</dbReference>
<dbReference type="InterPro" id="IPR011545">
    <property type="entry name" value="DEAD/DEAH_box_helicase_dom"/>
</dbReference>
<dbReference type="InterPro" id="IPR014001">
    <property type="entry name" value="Helicase_ATP-bd"/>
</dbReference>
<dbReference type="InterPro" id="IPR001650">
    <property type="entry name" value="Helicase_C-like"/>
</dbReference>
<dbReference type="InterPro" id="IPR027417">
    <property type="entry name" value="P-loop_NTPase"/>
</dbReference>
<dbReference type="InterPro" id="IPR000629">
    <property type="entry name" value="RNA-helicase_DEAD-box_CS"/>
</dbReference>
<dbReference type="InterPro" id="IPR014014">
    <property type="entry name" value="RNA_helicase_DEAD_Q_motif"/>
</dbReference>
<dbReference type="PANTHER" id="PTHR47958">
    <property type="entry name" value="ATP-DEPENDENT RNA HELICASE DBP3"/>
    <property type="match status" value="1"/>
</dbReference>
<dbReference type="Pfam" id="PF25430">
    <property type="entry name" value="DDX23"/>
    <property type="match status" value="1"/>
</dbReference>
<dbReference type="Pfam" id="PF00270">
    <property type="entry name" value="DEAD"/>
    <property type="match status" value="1"/>
</dbReference>
<dbReference type="Pfam" id="PF00271">
    <property type="entry name" value="Helicase_C"/>
    <property type="match status" value="1"/>
</dbReference>
<dbReference type="SMART" id="SM00487">
    <property type="entry name" value="DEXDc"/>
    <property type="match status" value="1"/>
</dbReference>
<dbReference type="SMART" id="SM00490">
    <property type="entry name" value="HELICc"/>
    <property type="match status" value="1"/>
</dbReference>
<dbReference type="SUPFAM" id="SSF52540">
    <property type="entry name" value="P-loop containing nucleoside triphosphate hydrolases"/>
    <property type="match status" value="1"/>
</dbReference>
<dbReference type="PROSITE" id="PS00039">
    <property type="entry name" value="DEAD_ATP_HELICASE"/>
    <property type="match status" value="1"/>
</dbReference>
<dbReference type="PROSITE" id="PS51192">
    <property type="entry name" value="HELICASE_ATP_BIND_1"/>
    <property type="match status" value="1"/>
</dbReference>
<dbReference type="PROSITE" id="PS51194">
    <property type="entry name" value="HELICASE_CTER"/>
    <property type="match status" value="1"/>
</dbReference>
<dbReference type="PROSITE" id="PS51195">
    <property type="entry name" value="Q_MOTIF"/>
    <property type="match status" value="1"/>
</dbReference>
<accession>Q4I7F9</accession>
<accession>A0A0E0SFC5</accession>
<accession>V6REZ9</accession>
<organism>
    <name type="scientific">Gibberella zeae (strain ATCC MYA-4620 / CBS 123657 / FGSC 9075 / NRRL 31084 / PH-1)</name>
    <name type="common">Wheat head blight fungus</name>
    <name type="synonym">Fusarium graminearum</name>
    <dbReference type="NCBI Taxonomy" id="229533"/>
    <lineage>
        <taxon>Eukaryota</taxon>
        <taxon>Fungi</taxon>
        <taxon>Dikarya</taxon>
        <taxon>Ascomycota</taxon>
        <taxon>Pezizomycotina</taxon>
        <taxon>Sordariomycetes</taxon>
        <taxon>Hypocreomycetidae</taxon>
        <taxon>Hypocreales</taxon>
        <taxon>Nectriaceae</taxon>
        <taxon>Fusarium</taxon>
    </lineage>
</organism>
<sequence length="721" mass="81083">MPLDIEELLRKKKAADTAAAKPRFIPKAERERLAAEKAKKEEDDKKRKASEEEQKRKEEEQKWRSNGSSRPNESNGSGRVPTGPRSMNDGRDDRERDRDRDQGRGRVRGKDRKGDKQGVGADKQSAEDIEATLLRSRYLGPQVNQQSNFSAKKKRMRTTEKKFNFEWDADEDTSRDNDPLYDRQTAVSHNGSFAGIGGEFDDGAEERARKRAKMIAQRDPENGKERAEGIMEDFFRARDKARQRADRRGLGKHWSEKSLDDMRERDWRIFKEDFGIATKGGMIPNPMRSWQESNLPQRLLNIVDDVGYKDPSPIQRAAIPIALQARDLIGVAVTGSGKTAAFLLPLLVYISDLPPLDEINKHDGPYALIMAPTRELVQQIETEARKFAGPLGFRVVSIVGGHQIEEQAYNLRDGAEIVVATPGRLLDCIERRLLVLSQCCYVIMDEADRMIDLGFEESVNKILDALPVTNEKPDTDEAENAQIMQRYLGGRDRYRQTMMYTATMPPLVERIAKKYLRRPAIVTIGNAGEAVDTVEQRVEFVSGEDRRKKRLQEILSSGNFGPPIIVFVNIKRNCDAVARDIKQMGWSAVTLHGSKTQEQREAALGSVRAGHTQVLVATDLAGRGIDVPDVSLVVNFNMATNIESYTHRIGRTGRAGKSGVAITFLGPEDHETMYDLKQILSKSSISKVPEELRRHEAAQSKPVRGAKKDKDEGSGKGNWQH</sequence>
<protein>
    <recommendedName>
        <fullName>Pre-mRNA-splicing ATP-dependent RNA helicase PRP28</fullName>
        <ecNumber>3.6.4.13</ecNumber>
    </recommendedName>
</protein>
<name>PRP28_GIBZE</name>
<evidence type="ECO:0000250" key="1"/>
<evidence type="ECO:0000255" key="2">
    <source>
        <dbReference type="PROSITE-ProRule" id="PRU00541"/>
    </source>
</evidence>
<evidence type="ECO:0000255" key="3">
    <source>
        <dbReference type="PROSITE-ProRule" id="PRU00542"/>
    </source>
</evidence>
<evidence type="ECO:0000256" key="4">
    <source>
        <dbReference type="SAM" id="MobiDB-lite"/>
    </source>
</evidence>
<evidence type="ECO:0000305" key="5"/>
<feature type="chain" id="PRO_0000232375" description="Pre-mRNA-splicing ATP-dependent RNA helicase PRP28">
    <location>
        <begin position="1"/>
        <end position="721"/>
    </location>
</feature>
<feature type="domain" description="Helicase ATP-binding" evidence="2">
    <location>
        <begin position="319"/>
        <end position="522"/>
    </location>
</feature>
<feature type="domain" description="Helicase C-terminal" evidence="3">
    <location>
        <begin position="533"/>
        <end position="696"/>
    </location>
</feature>
<feature type="region of interest" description="Disordered" evidence="4">
    <location>
        <begin position="12"/>
        <end position="134"/>
    </location>
</feature>
<feature type="region of interest" description="Disordered" evidence="4">
    <location>
        <begin position="685"/>
        <end position="721"/>
    </location>
</feature>
<feature type="short sequence motif" description="Q motif">
    <location>
        <begin position="288"/>
        <end position="316"/>
    </location>
</feature>
<feature type="short sequence motif" description="DEAD box">
    <location>
        <begin position="445"/>
        <end position="448"/>
    </location>
</feature>
<feature type="compositionally biased region" description="Basic and acidic residues" evidence="4">
    <location>
        <begin position="26"/>
        <end position="63"/>
    </location>
</feature>
<feature type="compositionally biased region" description="Polar residues" evidence="4">
    <location>
        <begin position="64"/>
        <end position="77"/>
    </location>
</feature>
<feature type="compositionally biased region" description="Basic and acidic residues" evidence="4">
    <location>
        <begin position="88"/>
        <end position="104"/>
    </location>
</feature>
<feature type="compositionally biased region" description="Basic and acidic residues" evidence="4">
    <location>
        <begin position="688"/>
        <end position="698"/>
    </location>
</feature>
<feature type="binding site" evidence="2">
    <location>
        <begin position="332"/>
        <end position="339"/>
    </location>
    <ligand>
        <name>ATP</name>
        <dbReference type="ChEBI" id="CHEBI:30616"/>
    </ligand>
</feature>